<dbReference type="EC" id="3.6.4.-" evidence="1"/>
<dbReference type="EMBL" id="CP000880">
    <property type="protein sequence ID" value="ABX22754.1"/>
    <property type="molecule type" value="Genomic_DNA"/>
</dbReference>
<dbReference type="SMR" id="A9MQF6"/>
<dbReference type="STRING" id="41514.SARI_02908"/>
<dbReference type="KEGG" id="ses:SARI_02908"/>
<dbReference type="HOGENOM" id="CLU_011520_0_0_6"/>
<dbReference type="Proteomes" id="UP000002084">
    <property type="component" value="Chromosome"/>
</dbReference>
<dbReference type="GO" id="GO:0005524">
    <property type="term" value="F:ATP binding"/>
    <property type="evidence" value="ECO:0007669"/>
    <property type="project" value="UniProtKB-UniRule"/>
</dbReference>
<dbReference type="GO" id="GO:0003677">
    <property type="term" value="F:DNA binding"/>
    <property type="evidence" value="ECO:0007669"/>
    <property type="project" value="UniProtKB-KW"/>
</dbReference>
<dbReference type="GO" id="GO:0004386">
    <property type="term" value="F:helicase activity"/>
    <property type="evidence" value="ECO:0007669"/>
    <property type="project" value="UniProtKB-UniRule"/>
</dbReference>
<dbReference type="GO" id="GO:0016817">
    <property type="term" value="F:hydrolase activity, acting on acid anhydrides"/>
    <property type="evidence" value="ECO:0007669"/>
    <property type="project" value="InterPro"/>
</dbReference>
<dbReference type="GO" id="GO:0006355">
    <property type="term" value="P:regulation of DNA-templated transcription"/>
    <property type="evidence" value="ECO:0007669"/>
    <property type="project" value="UniProtKB-UniRule"/>
</dbReference>
<dbReference type="CDD" id="cd18011">
    <property type="entry name" value="DEXDc_RapA"/>
    <property type="match status" value="1"/>
</dbReference>
<dbReference type="CDD" id="cd18793">
    <property type="entry name" value="SF2_C_SNF"/>
    <property type="match status" value="1"/>
</dbReference>
<dbReference type="FunFam" id="2.30.30.140:FF:000020">
    <property type="entry name" value="RNA polymerase-associated protein RapA"/>
    <property type="match status" value="1"/>
</dbReference>
<dbReference type="FunFam" id="3.30.360.80:FF:000001">
    <property type="entry name" value="RNA polymerase-associated protein RapA"/>
    <property type="match status" value="1"/>
</dbReference>
<dbReference type="FunFam" id="3.40.50.10810:FF:000012">
    <property type="entry name" value="RNA polymerase-associated protein RapA"/>
    <property type="match status" value="1"/>
</dbReference>
<dbReference type="FunFam" id="3.40.50.300:FF:000350">
    <property type="entry name" value="RNA polymerase-associated protein RapA"/>
    <property type="match status" value="1"/>
</dbReference>
<dbReference type="Gene3D" id="2.30.30.140">
    <property type="match status" value="1"/>
</dbReference>
<dbReference type="Gene3D" id="2.30.30.930">
    <property type="match status" value="1"/>
</dbReference>
<dbReference type="Gene3D" id="3.30.360.80">
    <property type="match status" value="1"/>
</dbReference>
<dbReference type="Gene3D" id="6.10.140.1500">
    <property type="match status" value="1"/>
</dbReference>
<dbReference type="Gene3D" id="6.10.140.2230">
    <property type="match status" value="1"/>
</dbReference>
<dbReference type="Gene3D" id="3.40.50.300">
    <property type="entry name" value="P-loop containing nucleotide triphosphate hydrolases"/>
    <property type="match status" value="1"/>
</dbReference>
<dbReference type="Gene3D" id="3.40.50.10810">
    <property type="entry name" value="Tandem AAA-ATPase domain"/>
    <property type="match status" value="1"/>
</dbReference>
<dbReference type="HAMAP" id="MF_01821">
    <property type="entry name" value="Helicase_RapA"/>
    <property type="match status" value="1"/>
</dbReference>
<dbReference type="InterPro" id="IPR014001">
    <property type="entry name" value="Helicase_ATP-bd"/>
</dbReference>
<dbReference type="InterPro" id="IPR001650">
    <property type="entry name" value="Helicase_C-like"/>
</dbReference>
<dbReference type="InterPro" id="IPR023949">
    <property type="entry name" value="Helicase_RapA"/>
</dbReference>
<dbReference type="InterPro" id="IPR027417">
    <property type="entry name" value="P-loop_NTPase"/>
</dbReference>
<dbReference type="InterPro" id="IPR022737">
    <property type="entry name" value="RapA_C"/>
</dbReference>
<dbReference type="InterPro" id="IPR038718">
    <property type="entry name" value="SNF2-like_sf"/>
</dbReference>
<dbReference type="InterPro" id="IPR049730">
    <property type="entry name" value="SNF2/RAD54-like_C"/>
</dbReference>
<dbReference type="InterPro" id="IPR000330">
    <property type="entry name" value="SNF2_N"/>
</dbReference>
<dbReference type="InterPro" id="IPR040765">
    <property type="entry name" value="Tudor_1_RapA"/>
</dbReference>
<dbReference type="InterPro" id="IPR040766">
    <property type="entry name" value="Tudor_2_RapA"/>
</dbReference>
<dbReference type="NCBIfam" id="NF003426">
    <property type="entry name" value="PRK04914.1"/>
    <property type="match status" value="1"/>
</dbReference>
<dbReference type="PANTHER" id="PTHR45766">
    <property type="entry name" value="DNA ANNEALING HELICASE AND ENDONUCLEASE ZRANB3 FAMILY MEMBER"/>
    <property type="match status" value="1"/>
</dbReference>
<dbReference type="PANTHER" id="PTHR45766:SF6">
    <property type="entry name" value="SWI_SNF-RELATED MATRIX-ASSOCIATED ACTIN-DEPENDENT REGULATOR OF CHROMATIN SUBFAMILY A-LIKE PROTEIN 1"/>
    <property type="match status" value="1"/>
</dbReference>
<dbReference type="Pfam" id="PF00271">
    <property type="entry name" value="Helicase_C"/>
    <property type="match status" value="1"/>
</dbReference>
<dbReference type="Pfam" id="PF12137">
    <property type="entry name" value="RapA_C"/>
    <property type="match status" value="1"/>
</dbReference>
<dbReference type="Pfam" id="PF00176">
    <property type="entry name" value="SNF2-rel_dom"/>
    <property type="match status" value="1"/>
</dbReference>
<dbReference type="Pfam" id="PF18339">
    <property type="entry name" value="Tudor_1_RapA"/>
    <property type="match status" value="1"/>
</dbReference>
<dbReference type="Pfam" id="PF18337">
    <property type="entry name" value="Tudor_RapA"/>
    <property type="match status" value="1"/>
</dbReference>
<dbReference type="SMART" id="SM00487">
    <property type="entry name" value="DEXDc"/>
    <property type="match status" value="1"/>
</dbReference>
<dbReference type="SMART" id="SM00490">
    <property type="entry name" value="HELICc"/>
    <property type="match status" value="1"/>
</dbReference>
<dbReference type="SUPFAM" id="SSF52540">
    <property type="entry name" value="P-loop containing nucleoside triphosphate hydrolases"/>
    <property type="match status" value="2"/>
</dbReference>
<dbReference type="PROSITE" id="PS51192">
    <property type="entry name" value="HELICASE_ATP_BIND_1"/>
    <property type="match status" value="1"/>
</dbReference>
<dbReference type="PROSITE" id="PS51194">
    <property type="entry name" value="HELICASE_CTER"/>
    <property type="match status" value="1"/>
</dbReference>
<gene>
    <name evidence="1" type="primary">rapA</name>
    <name type="ordered locus">SARI_02908</name>
</gene>
<sequence>MPFTLGQRWISDTESELGLGTVVAMDARTVTLLFPSTGENRLYARSDSPVTRVMFNPGDTITSHEGWQLHIDEVKEENGLLAYVGTRLDTEETNVTLREVLLDSKLVFSKPQDRLFAGQIDRMDRFALRYRARKFQSEQYRMPYSGLRGQRTNLIPHQLNIAHDVGRRHAPRVLLADEVGLGKTIEAGMILHQQLLSGAAERVLIIVPETLQHQWLVEMLRRFNLRFALFDDERYTEAQHDAYNPFETEQLVICSLDFARRNKQRLEHLCDAEWDLLVVDEAHHLVWSIDAPSREYMAIEQLAERVPGVLLLTATPEQLGMESHFARLRLLDPNRFHDFAQFVEEQKNYRPVADAVAMLLAGNKLSNDELNRLGDLIGEQDIEPLLQAANSDRDDAQAARQELVSMLMDRHGTSRVLFRNTRNGVKGFPKRELHTVKLPLPTQYQTAIKVSGIMGARKSAEDRARDMLYPEQIYQEFEGDTGTWWNFDPRVEWLMGYLTSHRSQKVLVICAKATTALQLEQVLREREGIRAAVFHEGMSIIERDRAAAWFAEEDTGAQVLLCSEIGSEGRNFQFASNLVMFDLPFNPDLLEQRIGRLDRIGQAHDIQIHVPYLEKTAQSVLVRWYHEGLDAFEHTCPTGRAIYDSAYASLINYLGAPEETDGFDDLITSCREQHEALKAQLEQGRDRLLEIHSNGGEKAQQLAQSIEEQDDDTSLIAFAMNLFDIIGINQDDRGDNLIVLTPSDHMLVPDFPGLPEDGCTITFERDVALSREDAQFITWEHPLIRNGLDLILSGDTGSSTISLLKNKALPVGTLLVELIYVVEAQAPKQLQLNRFLPPTPVRMLLDKNGNNLAAQVEFETFNRQLSAVNRHTGSKLVNAVQQDVHAILQLGETQIEKSARALIDNARREADEKLSGELSRLEALRAVNPNIRDDELAAIDSNRQQVLESLNQASWRLDALRLIVVTHQ</sequence>
<proteinExistence type="inferred from homology"/>
<organism>
    <name type="scientific">Salmonella arizonae (strain ATCC BAA-731 / CDC346-86 / RSK2980)</name>
    <dbReference type="NCBI Taxonomy" id="41514"/>
    <lineage>
        <taxon>Bacteria</taxon>
        <taxon>Pseudomonadati</taxon>
        <taxon>Pseudomonadota</taxon>
        <taxon>Gammaproteobacteria</taxon>
        <taxon>Enterobacterales</taxon>
        <taxon>Enterobacteriaceae</taxon>
        <taxon>Salmonella</taxon>
    </lineage>
</organism>
<evidence type="ECO:0000255" key="1">
    <source>
        <dbReference type="HAMAP-Rule" id="MF_01821"/>
    </source>
</evidence>
<keyword id="KW-0010">Activator</keyword>
<keyword id="KW-0067">ATP-binding</keyword>
<keyword id="KW-0238">DNA-binding</keyword>
<keyword id="KW-0347">Helicase</keyword>
<keyword id="KW-0378">Hydrolase</keyword>
<keyword id="KW-0547">Nucleotide-binding</keyword>
<keyword id="KW-1185">Reference proteome</keyword>
<keyword id="KW-0804">Transcription</keyword>
<keyword id="KW-0805">Transcription regulation</keyword>
<comment type="function">
    <text evidence="1">Transcription regulator that activates transcription by stimulating RNA polymerase (RNAP) recycling in case of stress conditions such as supercoiled DNA or high salt concentrations. Probably acts by releasing the RNAP, when it is trapped or immobilized on tightly supercoiled DNA. Does not activate transcription on linear DNA. Probably not involved in DNA repair.</text>
</comment>
<comment type="subunit">
    <text evidence="1">Interacts with the RNAP. Has a higher affinity for the core RNAP than for the holoenzyme. Its ATPase activity is stimulated by binding to RNAP.</text>
</comment>
<comment type="similarity">
    <text evidence="1">Belongs to the SNF2/RAD54 helicase family. RapA subfamily.</text>
</comment>
<name>RAPA_SALAR</name>
<protein>
    <recommendedName>
        <fullName evidence="1">RNA polymerase-associated protein RapA</fullName>
        <ecNumber evidence="1">3.6.4.-</ecNumber>
    </recommendedName>
    <alternativeName>
        <fullName evidence="1">ATP-dependent helicase HepA</fullName>
    </alternativeName>
</protein>
<reference key="1">
    <citation type="submission" date="2007-11" db="EMBL/GenBank/DDBJ databases">
        <authorList>
            <consortium name="The Salmonella enterica serovar Arizonae Genome Sequencing Project"/>
            <person name="McClelland M."/>
            <person name="Sanderson E.K."/>
            <person name="Porwollik S."/>
            <person name="Spieth J."/>
            <person name="Clifton W.S."/>
            <person name="Fulton R."/>
            <person name="Chunyan W."/>
            <person name="Wollam A."/>
            <person name="Shah N."/>
            <person name="Pepin K."/>
            <person name="Bhonagiri V."/>
            <person name="Nash W."/>
            <person name="Johnson M."/>
            <person name="Thiruvilangam P."/>
            <person name="Wilson R."/>
        </authorList>
    </citation>
    <scope>NUCLEOTIDE SEQUENCE [LARGE SCALE GENOMIC DNA]</scope>
    <source>
        <strain>ATCC BAA-731 / CDC346-86 / RSK2980</strain>
    </source>
</reference>
<feature type="chain" id="PRO_1000088372" description="RNA polymerase-associated protein RapA">
    <location>
        <begin position="1"/>
        <end position="968"/>
    </location>
</feature>
<feature type="domain" description="Helicase ATP-binding" evidence="1">
    <location>
        <begin position="164"/>
        <end position="334"/>
    </location>
</feature>
<feature type="domain" description="Helicase C-terminal" evidence="1">
    <location>
        <begin position="490"/>
        <end position="644"/>
    </location>
</feature>
<feature type="short sequence motif" description="DEAH box">
    <location>
        <begin position="280"/>
        <end position="283"/>
    </location>
</feature>
<feature type="binding site" evidence="1">
    <location>
        <begin position="177"/>
        <end position="184"/>
    </location>
    <ligand>
        <name>ATP</name>
        <dbReference type="ChEBI" id="CHEBI:30616"/>
    </ligand>
</feature>
<accession>A9MQF6</accession>